<feature type="chain" id="PRO_0000326571" description="Protein TIC 214">
    <location>
        <begin position="1"/>
        <end position="1676"/>
    </location>
</feature>
<feature type="transmembrane region" description="Helical" evidence="2">
    <location>
        <begin position="24"/>
        <end position="44"/>
    </location>
</feature>
<feature type="transmembrane region" description="Helical" evidence="2">
    <location>
        <begin position="70"/>
        <end position="90"/>
    </location>
</feature>
<feature type="transmembrane region" description="Helical" evidence="2">
    <location>
        <begin position="93"/>
        <end position="113"/>
    </location>
</feature>
<feature type="transmembrane region" description="Helical" evidence="2">
    <location>
        <begin position="130"/>
        <end position="150"/>
    </location>
</feature>
<feature type="transmembrane region" description="Helical" evidence="2">
    <location>
        <begin position="170"/>
        <end position="190"/>
    </location>
</feature>
<feature type="transmembrane region" description="Helical" evidence="2">
    <location>
        <begin position="218"/>
        <end position="238"/>
    </location>
</feature>
<feature type="region of interest" description="Disordered" evidence="3">
    <location>
        <begin position="264"/>
        <end position="302"/>
    </location>
</feature>
<feature type="region of interest" description="Disordered" evidence="3">
    <location>
        <begin position="546"/>
        <end position="610"/>
    </location>
</feature>
<feature type="region of interest" description="Disordered" evidence="3">
    <location>
        <begin position="1123"/>
        <end position="1151"/>
    </location>
</feature>
<feature type="region of interest" description="Disordered" evidence="3">
    <location>
        <begin position="1372"/>
        <end position="1436"/>
    </location>
</feature>
<feature type="coiled-coil region" evidence="2">
    <location>
        <begin position="1384"/>
        <end position="1436"/>
    </location>
</feature>
<feature type="compositionally biased region" description="Basic and acidic residues" evidence="3">
    <location>
        <begin position="264"/>
        <end position="276"/>
    </location>
</feature>
<feature type="compositionally biased region" description="Basic and acidic residues" evidence="3">
    <location>
        <begin position="283"/>
        <end position="298"/>
    </location>
</feature>
<feature type="compositionally biased region" description="Polar residues" evidence="3">
    <location>
        <begin position="562"/>
        <end position="586"/>
    </location>
</feature>
<feature type="compositionally biased region" description="Basic and acidic residues" evidence="3">
    <location>
        <begin position="597"/>
        <end position="610"/>
    </location>
</feature>
<feature type="compositionally biased region" description="Polar residues" evidence="3">
    <location>
        <begin position="1123"/>
        <end position="1138"/>
    </location>
</feature>
<feature type="compositionally biased region" description="Low complexity" evidence="3">
    <location>
        <begin position="1372"/>
        <end position="1390"/>
    </location>
</feature>
<feature type="compositionally biased region" description="Basic and acidic residues" evidence="3">
    <location>
        <begin position="1391"/>
        <end position="1402"/>
    </location>
</feature>
<feature type="compositionally biased region" description="Basic and acidic residues" evidence="3">
    <location>
        <begin position="1409"/>
        <end position="1426"/>
    </location>
</feature>
<dbReference type="EMBL" id="EU189133">
    <property type="protein sequence ID" value="ABW20601.1"/>
    <property type="molecule type" value="Genomic_DNA"/>
</dbReference>
<dbReference type="RefSeq" id="YP_001531256.1">
    <property type="nucleotide sequence ID" value="NC_009949.1"/>
</dbReference>
<dbReference type="GeneID" id="5714769"/>
<dbReference type="GO" id="GO:0009706">
    <property type="term" value="C:chloroplast inner membrane"/>
    <property type="evidence" value="ECO:0007669"/>
    <property type="project" value="UniProtKB-SubCell"/>
</dbReference>
<dbReference type="GO" id="GO:0015031">
    <property type="term" value="P:protein transport"/>
    <property type="evidence" value="ECO:0007669"/>
    <property type="project" value="UniProtKB-KW"/>
</dbReference>
<dbReference type="InterPro" id="IPR008896">
    <property type="entry name" value="TIC214"/>
</dbReference>
<dbReference type="PANTHER" id="PTHR33163:SF40">
    <property type="entry name" value="PROTEIN TIC 214"/>
    <property type="match status" value="1"/>
</dbReference>
<dbReference type="PANTHER" id="PTHR33163">
    <property type="entry name" value="PROTEIN TIC 214-RELATED"/>
    <property type="match status" value="1"/>
</dbReference>
<dbReference type="Pfam" id="PF05758">
    <property type="entry name" value="Ycf1"/>
    <property type="match status" value="4"/>
</dbReference>
<protein>
    <recommendedName>
        <fullName evidence="1">Protein TIC 214</fullName>
    </recommendedName>
    <alternativeName>
        <fullName evidence="1">Translocon at the inner envelope membrane of chloroplasts 214</fullName>
        <shortName evidence="1">AtTIC214</shortName>
    </alternativeName>
</protein>
<organism>
    <name type="scientific">Cuscuta obtusiflora</name>
    <name type="common">Peruvian dodder</name>
    <dbReference type="NCBI Taxonomy" id="437280"/>
    <lineage>
        <taxon>Eukaryota</taxon>
        <taxon>Viridiplantae</taxon>
        <taxon>Streptophyta</taxon>
        <taxon>Embryophyta</taxon>
        <taxon>Tracheophyta</taxon>
        <taxon>Spermatophyta</taxon>
        <taxon>Magnoliopsida</taxon>
        <taxon>eudicotyledons</taxon>
        <taxon>Gunneridae</taxon>
        <taxon>Pentapetalae</taxon>
        <taxon>asterids</taxon>
        <taxon>lamiids</taxon>
        <taxon>Solanales</taxon>
        <taxon>Convolvulaceae</taxon>
        <taxon>Cuscuteae</taxon>
        <taxon>Cuscuta</taxon>
        <taxon>Cuscuta subgen. Grammica</taxon>
        <taxon>Cuscuta sect. Cleistogrammica</taxon>
    </lineage>
</organism>
<gene>
    <name evidence="1" type="primary">TIC214</name>
    <name type="synonym">ycf1</name>
</gene>
<accession>A8W3M6</accession>
<geneLocation type="plastid"/>
<reference key="1">
    <citation type="journal article" date="2007" name="BMC Plant Biol.">
        <title>Complete plastid genome sequences suggest strong selection for retention of photosynthetic genes in the parasitic plant genus Cuscuta.</title>
        <authorList>
            <person name="McNeal J.R."/>
            <person name="Kuehl J.V."/>
            <person name="Boore J.L."/>
            <person name="dePamphilis C.W."/>
        </authorList>
    </citation>
    <scope>NUCLEOTIDE SEQUENCE [LARGE SCALE GENOMIC DNA]</scope>
</reference>
<sequence>MNFQYLVKIVAGSYYNISSSILSKIINSVILAGLYYGFLTALALKTSYILLIRAMVSENQNHKAAATTGLILGQLGQFLSIYYAPLYIAFGRPYTLTVLTLIYFLVNLFGNNLDKNASSFGAYGNKIRTLEILCIFLNNLILQLLNTCIFPSSTLARVVNVYLFRCNNKMVFLISSFSAWLIGQILVLMCCKLVLGRGQNKNSIRALIKKYLVRNSMFFLVVNCLFGSSLFILTIQSLGRIPLPIPTQNLSEISRIEKREEERLKKSGVAKEGKSTEDEEDLSHEKDSFKKEPYSKLENEDEEIEKDIEQAIGTLLFDYKRWTRPFRYIKNNQFEQAVRNEMSQYFFGTQQSDGKSRICFTHPVNLSMFWKGISFLLRDKNYSNKLTRRWVQRNKKKLKSIKSDLVNRIRNLDNTIKIEFGTPRTRLCTCIHENETKQEYVPEEYDPLLAGCYRGRIKKEQAIFQKQENETLTNPLDTLIDVLENNTNTQLFKANPIGKQKISFEEELRKKVPRWSYKLITELEQISYYRNPPDDHDIRTRKAKSLVVFDPSKHPNMETMEDSGNIQNKSSDKTINPQNNLTNSKTRTSENDPDDNTTEKEPKDDKSYSIRYSHQSDFRHGLIKDSMRSLRRKIVITDLFKGNVHSPLFFERRKKKNLFSFSGLLKLKQLFITWSAQKEFWDLKDSKKKLKIKDKKQQETKERIEIAEAWDSFELTQVLRGVLLVIQSSLRKDILLPSLIIIKNLGRILLFQTSEWSHDFEELEKETHVPCTYNGVPLGEKEFPRNWLTEGIQIKILSPFCLKPWNDEKKPLPASENFCFLTIWGQETDHIFGRPRRKPSFFKPILTKLDTSLKKINVVQFFKEKRTPESNIVKEQKVDDLSDNILNEFQFSKREKLEAITNRTNLIKTKLETIAKEKKTVTRDLDKNLSKKSLKQIKFKLVSNLSLFQYFLKLFIQKIYTLFLRNILLISGLLKKILNGEKEQLIDQYCSKNEKIKKVHKKFNFILNRKSKLSTNFSNLSQAYVFYKISQEMANFSVCKLRSILNQQVKAVFVKPEIKESFARYGLIQIQKMDKKNLQLRTRQWKHWLRVNSQHHLSHILWSSFGAKKENWRKKIKRCNKFNKQSLQKGNSKGNSNLDDSKNRNKNNLILNKNKKDNFEKCYRYDVLSSKFIKFEKKKTSLFHRSRISLTRQKQILYHKNMSQNFLFALPKNMLVKNLMGKSERIHIPYIEKDLDRKYLSFENIQFSLKKKVNIESWIPLTSRGNRTKTYNYELLDELELMKFIDQIYKKEKEFLFPCIERNKQIRNSKSKYSFIDWMGLNQKLLKHPVTNLELWFFPEFVSLLNIYKLKPWVLQSQLLLSKLTFNKLSSQQQNQTTTKINTETKNQQKNRVENEENKETENQQNAETKNKQKSKTENEENKETENQQNDESEDDPQLAYIRSFMKKHLLFQLRGESIFKKSGFKNIQILCLLLRLMNQNEMLFSSIQREKLNLHIMPEIGIKDLTLEVLEEIGVPEFLKEKRVNFEPFPLYINKNGKFLIYQLLNMSLVHKIKYPTNNESRNQGVITTQKNNNVASHIPENILSSRRRRELRILMCLNKKKKKCKGTEATNKSFSYKKKCAKIWEEQKSTIEFFIWPNSRFEDLTCMNRYWFYTNNGSRFSMLRIVMYLPLKNY</sequence>
<evidence type="ECO:0000250" key="1">
    <source>
        <dbReference type="UniProtKB" id="P56785"/>
    </source>
</evidence>
<evidence type="ECO:0000255" key="2"/>
<evidence type="ECO:0000256" key="3">
    <source>
        <dbReference type="SAM" id="MobiDB-lite"/>
    </source>
</evidence>
<evidence type="ECO:0000305" key="4"/>
<proteinExistence type="inferred from homology"/>
<comment type="function">
    <text evidence="1">Involved in protein precursor import into chloroplasts. May be part of an intermediate translocation complex acting as a protein-conducting channel at the inner envelope.</text>
</comment>
<comment type="subunit">
    <text evidence="1">Part of the Tic complex.</text>
</comment>
<comment type="subcellular location">
    <subcellularLocation>
        <location evidence="1">Plastid</location>
        <location evidence="1">Chloroplast inner membrane</location>
        <topology evidence="2">Multi-pass membrane protein</topology>
    </subcellularLocation>
</comment>
<comment type="similarity">
    <text evidence="4">Belongs to the TIC214 family.</text>
</comment>
<comment type="caution">
    <text evidence="4">Only inflorescences, fruits, starved seedlings and stressed stem tips are green in this organism.</text>
</comment>
<name>TI214_CUSOB</name>
<keyword id="KW-0150">Chloroplast</keyword>
<keyword id="KW-0175">Coiled coil</keyword>
<keyword id="KW-0472">Membrane</keyword>
<keyword id="KW-0934">Plastid</keyword>
<keyword id="KW-1001">Plastid inner membrane</keyword>
<keyword id="KW-0653">Protein transport</keyword>
<keyword id="KW-0812">Transmembrane</keyword>
<keyword id="KW-1133">Transmembrane helix</keyword>
<keyword id="KW-0813">Transport</keyword>